<protein>
    <recommendedName>
        <fullName>Transcriptional regulatory protein PcoR</fullName>
    </recommendedName>
</protein>
<sequence>MQRILIVEDEQKTGRYLQQGLVEEGYQADLFNNGRDGLGAASKGQYDLIILDVMLPFLDGWQIISALRESGHEEPVLFLTAKDNVRDKVKGLELGADDYLIKPFDFTELVARVRTLLRRARSQAATVCTIADMTVDMVRRTVIRSGKKIHLTGKEYVLLELLLQRTGEVLPRSLISSLVWNMNFDSDTNVIDVAVRRLRSKIDDDFEPKLIHTVRGAGYVLEIREE</sequence>
<accession>Q47456</accession>
<geneLocation type="plasmid">
    <name>pRJ1004</name>
</geneLocation>
<gene>
    <name type="primary">pcoR</name>
</gene>
<organism>
    <name type="scientific">Escherichia coli</name>
    <dbReference type="NCBI Taxonomy" id="562"/>
    <lineage>
        <taxon>Bacteria</taxon>
        <taxon>Pseudomonadati</taxon>
        <taxon>Pseudomonadota</taxon>
        <taxon>Gammaproteobacteria</taxon>
        <taxon>Enterobacterales</taxon>
        <taxon>Enterobacteriaceae</taxon>
        <taxon>Escherichia</taxon>
    </lineage>
</organism>
<dbReference type="EMBL" id="X83541">
    <property type="protein sequence ID" value="CAA58529.1"/>
    <property type="molecule type" value="Genomic_DNA"/>
</dbReference>
<dbReference type="PIR" id="S70164">
    <property type="entry name" value="S70164"/>
</dbReference>
<dbReference type="RefSeq" id="WP_001188930.1">
    <property type="nucleotide sequence ID" value="NZ_WVVT01000006.1"/>
</dbReference>
<dbReference type="BMRB" id="Q47456"/>
<dbReference type="SMR" id="Q47456"/>
<dbReference type="GeneID" id="93248124"/>
<dbReference type="eggNOG" id="COG0745">
    <property type="taxonomic scope" value="Bacteria"/>
</dbReference>
<dbReference type="OMA" id="RTMIASQ"/>
<dbReference type="GO" id="GO:0005829">
    <property type="term" value="C:cytosol"/>
    <property type="evidence" value="ECO:0007669"/>
    <property type="project" value="TreeGrafter"/>
</dbReference>
<dbReference type="GO" id="GO:0032993">
    <property type="term" value="C:protein-DNA complex"/>
    <property type="evidence" value="ECO:0007669"/>
    <property type="project" value="TreeGrafter"/>
</dbReference>
<dbReference type="GO" id="GO:0000156">
    <property type="term" value="F:phosphorelay response regulator activity"/>
    <property type="evidence" value="ECO:0007669"/>
    <property type="project" value="TreeGrafter"/>
</dbReference>
<dbReference type="GO" id="GO:0000976">
    <property type="term" value="F:transcription cis-regulatory region binding"/>
    <property type="evidence" value="ECO:0007669"/>
    <property type="project" value="TreeGrafter"/>
</dbReference>
<dbReference type="GO" id="GO:0006355">
    <property type="term" value="P:regulation of DNA-templated transcription"/>
    <property type="evidence" value="ECO:0007669"/>
    <property type="project" value="InterPro"/>
</dbReference>
<dbReference type="CDD" id="cd19935">
    <property type="entry name" value="REC_OmpR_CusR-like"/>
    <property type="match status" value="1"/>
</dbReference>
<dbReference type="CDD" id="cd00383">
    <property type="entry name" value="trans_reg_C"/>
    <property type="match status" value="1"/>
</dbReference>
<dbReference type="FunFam" id="3.40.50.2300:FF:000001">
    <property type="entry name" value="DNA-binding response regulator PhoB"/>
    <property type="match status" value="1"/>
</dbReference>
<dbReference type="FunFam" id="1.10.10.10:FF:000005">
    <property type="entry name" value="Two-component system response regulator"/>
    <property type="match status" value="1"/>
</dbReference>
<dbReference type="Gene3D" id="3.40.50.2300">
    <property type="match status" value="1"/>
</dbReference>
<dbReference type="Gene3D" id="6.10.250.690">
    <property type="match status" value="1"/>
</dbReference>
<dbReference type="Gene3D" id="1.10.10.10">
    <property type="entry name" value="Winged helix-like DNA-binding domain superfamily/Winged helix DNA-binding domain"/>
    <property type="match status" value="1"/>
</dbReference>
<dbReference type="InterPro" id="IPR011006">
    <property type="entry name" value="CheY-like_superfamily"/>
</dbReference>
<dbReference type="InterPro" id="IPR006291">
    <property type="entry name" value="CusR-like"/>
</dbReference>
<dbReference type="InterPro" id="IPR001867">
    <property type="entry name" value="OmpR/PhoB-type_DNA-bd"/>
</dbReference>
<dbReference type="InterPro" id="IPR001789">
    <property type="entry name" value="Sig_transdc_resp-reg_receiver"/>
</dbReference>
<dbReference type="InterPro" id="IPR039420">
    <property type="entry name" value="WalR-like"/>
</dbReference>
<dbReference type="InterPro" id="IPR036388">
    <property type="entry name" value="WH-like_DNA-bd_sf"/>
</dbReference>
<dbReference type="NCBIfam" id="TIGR01387">
    <property type="entry name" value="cztR_silR_copR"/>
    <property type="match status" value="1"/>
</dbReference>
<dbReference type="PANTHER" id="PTHR48111">
    <property type="entry name" value="REGULATOR OF RPOS"/>
    <property type="match status" value="1"/>
</dbReference>
<dbReference type="PANTHER" id="PTHR48111:SF41">
    <property type="entry name" value="TRANSCRIPTIONAL REGULATORY PROTEIN CUSR-RELATED"/>
    <property type="match status" value="1"/>
</dbReference>
<dbReference type="Pfam" id="PF00072">
    <property type="entry name" value="Response_reg"/>
    <property type="match status" value="1"/>
</dbReference>
<dbReference type="Pfam" id="PF00486">
    <property type="entry name" value="Trans_reg_C"/>
    <property type="match status" value="1"/>
</dbReference>
<dbReference type="SMART" id="SM00448">
    <property type="entry name" value="REC"/>
    <property type="match status" value="1"/>
</dbReference>
<dbReference type="SMART" id="SM00862">
    <property type="entry name" value="Trans_reg_C"/>
    <property type="match status" value="1"/>
</dbReference>
<dbReference type="SUPFAM" id="SSF52172">
    <property type="entry name" value="CheY-like"/>
    <property type="match status" value="1"/>
</dbReference>
<dbReference type="PROSITE" id="PS51755">
    <property type="entry name" value="OMPR_PHOB"/>
    <property type="match status" value="1"/>
</dbReference>
<dbReference type="PROSITE" id="PS50110">
    <property type="entry name" value="RESPONSE_REGULATORY"/>
    <property type="match status" value="1"/>
</dbReference>
<evidence type="ECO:0000255" key="1">
    <source>
        <dbReference type="PROSITE-ProRule" id="PRU00169"/>
    </source>
</evidence>
<evidence type="ECO:0000255" key="2">
    <source>
        <dbReference type="PROSITE-ProRule" id="PRU01091"/>
    </source>
</evidence>
<evidence type="ECO:0000305" key="3"/>
<name>PCOR_ECOLX</name>
<reference key="1">
    <citation type="journal article" date="1995" name="Mol. Microbiol.">
        <title>Molecular genetics and transport analysis of the copper-resistance determinant (pco) from Escherichia coli plasmid pRJ1004.</title>
        <authorList>
            <person name="Brown N.L."/>
            <person name="Barrett S.R."/>
            <person name="Camakaris J."/>
            <person name="Lee B.T.O."/>
            <person name="Rouch D.A."/>
        </authorList>
    </citation>
    <scope>NUCLEOTIDE SEQUENCE [GENOMIC DNA]</scope>
    <source>
        <strain>RJ97</strain>
    </source>
</reference>
<reference key="2">
    <citation type="journal article" date="1997" name="Microbiology">
        <title>Copper-inducible transcriptional regulation at two promoters in the Escherichia coli copper resistance determinant pco.</title>
        <authorList>
            <person name="Rouch D.A."/>
            <person name="Brown N.L."/>
        </authorList>
    </citation>
    <scope>TRANSCRIPTIONAL REGULATION</scope>
</reference>
<keyword id="KW-0010">Activator</keyword>
<keyword id="KW-0186">Copper</keyword>
<keyword id="KW-0963">Cytoplasm</keyword>
<keyword id="KW-0238">DNA-binding</keyword>
<keyword id="KW-0597">Phosphoprotein</keyword>
<keyword id="KW-0614">Plasmid</keyword>
<keyword id="KW-0804">Transcription</keyword>
<keyword id="KW-0805">Transcription regulation</keyword>
<keyword id="KW-0902">Two-component regulatory system</keyword>
<comment type="function">
    <text>Probable member of a two-component regulatory system PcoS/PcoR. May be involved in the activation of copper resistance gene operon pcoABCD by binding to a specific site on the cop operon promoter (copper box).</text>
</comment>
<comment type="subcellular location">
    <subcellularLocation>
        <location evidence="3">Cytoplasm</location>
    </subcellularLocation>
</comment>
<comment type="PTM">
    <text evidence="3">Phosphorylated by PcoS.</text>
</comment>
<comment type="miscellaneous">
    <text>Transcriptional regulation studies were performed in E.coli K12.</text>
</comment>
<feature type="chain" id="PRO_0000081077" description="Transcriptional regulatory protein PcoR">
    <location>
        <begin position="1"/>
        <end position="226"/>
    </location>
</feature>
<feature type="domain" description="Response regulatory" evidence="1">
    <location>
        <begin position="3"/>
        <end position="117"/>
    </location>
</feature>
<feature type="DNA-binding region" description="OmpR/PhoB-type" evidence="2">
    <location>
        <begin position="125"/>
        <end position="223"/>
    </location>
</feature>
<feature type="modified residue" description="4-aspartylphosphate" evidence="1">
    <location>
        <position position="52"/>
    </location>
</feature>
<proteinExistence type="inferred from homology"/>